<organism>
    <name type="scientific">Erythrobacter litoralis (strain HTCC2594)</name>
    <dbReference type="NCBI Taxonomy" id="314225"/>
    <lineage>
        <taxon>Bacteria</taxon>
        <taxon>Pseudomonadati</taxon>
        <taxon>Pseudomonadota</taxon>
        <taxon>Alphaproteobacteria</taxon>
        <taxon>Sphingomonadales</taxon>
        <taxon>Erythrobacteraceae</taxon>
        <taxon>Erythrobacter/Porphyrobacter group</taxon>
        <taxon>Erythrobacter</taxon>
    </lineage>
</organism>
<accession>Q2N9J2</accession>
<feature type="chain" id="PRO_0000350163" description="Dual-specificity RNA methyltransferase RlmN">
    <location>
        <begin position="1"/>
        <end position="418"/>
    </location>
</feature>
<feature type="domain" description="Radical SAM core" evidence="2">
    <location>
        <begin position="128"/>
        <end position="383"/>
    </location>
</feature>
<feature type="region of interest" description="Disordered" evidence="3">
    <location>
        <begin position="1"/>
        <end position="21"/>
    </location>
</feature>
<feature type="region of interest" description="Disordered" evidence="3">
    <location>
        <begin position="393"/>
        <end position="418"/>
    </location>
</feature>
<feature type="compositionally biased region" description="Basic and acidic residues" evidence="3">
    <location>
        <begin position="399"/>
        <end position="408"/>
    </location>
</feature>
<feature type="active site" description="Proton acceptor" evidence="1">
    <location>
        <position position="122"/>
    </location>
</feature>
<feature type="active site" description="S-methylcysteine intermediate" evidence="1">
    <location>
        <position position="388"/>
    </location>
</feature>
<feature type="binding site" evidence="1">
    <location>
        <position position="142"/>
    </location>
    <ligand>
        <name>[4Fe-4S] cluster</name>
        <dbReference type="ChEBI" id="CHEBI:49883"/>
        <note>4Fe-4S-S-AdoMet</note>
    </ligand>
</feature>
<feature type="binding site" evidence="1">
    <location>
        <position position="146"/>
    </location>
    <ligand>
        <name>[4Fe-4S] cluster</name>
        <dbReference type="ChEBI" id="CHEBI:49883"/>
        <note>4Fe-4S-S-AdoMet</note>
    </ligand>
</feature>
<feature type="binding site" evidence="1">
    <location>
        <position position="149"/>
    </location>
    <ligand>
        <name>[4Fe-4S] cluster</name>
        <dbReference type="ChEBI" id="CHEBI:49883"/>
        <note>4Fe-4S-S-AdoMet</note>
    </ligand>
</feature>
<feature type="binding site" evidence="1">
    <location>
        <begin position="212"/>
        <end position="213"/>
    </location>
    <ligand>
        <name>S-adenosyl-L-methionine</name>
        <dbReference type="ChEBI" id="CHEBI:59789"/>
    </ligand>
</feature>
<feature type="binding site" evidence="1">
    <location>
        <position position="244"/>
    </location>
    <ligand>
        <name>S-adenosyl-L-methionine</name>
        <dbReference type="ChEBI" id="CHEBI:59789"/>
    </ligand>
</feature>
<feature type="binding site" evidence="1">
    <location>
        <begin position="266"/>
        <end position="268"/>
    </location>
    <ligand>
        <name>S-adenosyl-L-methionine</name>
        <dbReference type="ChEBI" id="CHEBI:59789"/>
    </ligand>
</feature>
<feature type="binding site" evidence="1">
    <location>
        <position position="345"/>
    </location>
    <ligand>
        <name>S-adenosyl-L-methionine</name>
        <dbReference type="ChEBI" id="CHEBI:59789"/>
    </ligand>
</feature>
<feature type="disulfide bond" description="(transient)" evidence="1">
    <location>
        <begin position="135"/>
        <end position="388"/>
    </location>
</feature>
<gene>
    <name evidence="1" type="primary">rlmN</name>
    <name type="ordered locus">ELI_07785</name>
</gene>
<name>RLMN_ERYLH</name>
<reference key="1">
    <citation type="journal article" date="2009" name="J. Bacteriol.">
        <title>Complete genome sequence of Erythrobacter litoralis HTCC2594.</title>
        <authorList>
            <person name="Oh H.M."/>
            <person name="Giovannoni S.J."/>
            <person name="Ferriera S."/>
            <person name="Johnson J."/>
            <person name="Cho J.C."/>
        </authorList>
    </citation>
    <scope>NUCLEOTIDE SEQUENCE [LARGE SCALE GENOMIC DNA]</scope>
    <source>
        <strain>HTCC2594</strain>
    </source>
</reference>
<protein>
    <recommendedName>
        <fullName evidence="1">Dual-specificity RNA methyltransferase RlmN</fullName>
        <ecNumber evidence="1">2.1.1.192</ecNumber>
    </recommendedName>
    <alternativeName>
        <fullName evidence="1">23S rRNA (adenine(2503)-C(2))-methyltransferase</fullName>
    </alternativeName>
    <alternativeName>
        <fullName evidence="1">23S rRNA m2A2503 methyltransferase</fullName>
    </alternativeName>
    <alternativeName>
        <fullName evidence="1">Ribosomal RNA large subunit methyltransferase N</fullName>
    </alternativeName>
    <alternativeName>
        <fullName evidence="1">tRNA (adenine(37)-C(2))-methyltransferase</fullName>
    </alternativeName>
    <alternativeName>
        <fullName evidence="1">tRNA m2A37 methyltransferase</fullName>
    </alternativeName>
</protein>
<sequence length="418" mass="46282">MADTSLMPIPGQVDPVPAPRDITPRADGRVDLMGLPKARIQELFAEAGLDAKQAKLRSKQVYHWLYHRGVTDFEAMTDIAKTMRPWLAERFIVGRPNVVEAQHSTDGTRKWLLQTDDGHDFEMVFIPDADRGTLCVSSQVGCTLNCRFCHTGTMRLVRNLTPGEIVGQVMLARDALGEWPKGRMDGLDDVEDTGHYSADGRLLTNIVMMGMGEPLYNFDNVRDALKLVMDGEGLALSKRRITLSTSGVVPMMERCGEEIGVNLAVSLHAVTKDIRDEIVPINKKYGIEELLQACADYPGASNARRITFEYVMLKDKNDTDEHARELVRLLKQYNLPAKVNLIPFNPWPGAAYECSTPERIRAFSNIVFEGGISAPVRTPRGRDIDAACGQLKTAAQKKSRAERDREAAAEAEAAASQA</sequence>
<dbReference type="EC" id="2.1.1.192" evidence="1"/>
<dbReference type="EMBL" id="CP000157">
    <property type="protein sequence ID" value="ABC63649.1"/>
    <property type="molecule type" value="Genomic_DNA"/>
</dbReference>
<dbReference type="RefSeq" id="WP_011414483.1">
    <property type="nucleotide sequence ID" value="NC_007722.1"/>
</dbReference>
<dbReference type="SMR" id="Q2N9J2"/>
<dbReference type="STRING" id="314225.ELI_07785"/>
<dbReference type="KEGG" id="eli:ELI_07785"/>
<dbReference type="eggNOG" id="COG0820">
    <property type="taxonomic scope" value="Bacteria"/>
</dbReference>
<dbReference type="HOGENOM" id="CLU_029101_0_0_5"/>
<dbReference type="OrthoDB" id="9793973at2"/>
<dbReference type="Proteomes" id="UP000008808">
    <property type="component" value="Chromosome"/>
</dbReference>
<dbReference type="GO" id="GO:0005737">
    <property type="term" value="C:cytoplasm"/>
    <property type="evidence" value="ECO:0007669"/>
    <property type="project" value="UniProtKB-SubCell"/>
</dbReference>
<dbReference type="GO" id="GO:0051539">
    <property type="term" value="F:4 iron, 4 sulfur cluster binding"/>
    <property type="evidence" value="ECO:0007669"/>
    <property type="project" value="UniProtKB-UniRule"/>
</dbReference>
<dbReference type="GO" id="GO:0046872">
    <property type="term" value="F:metal ion binding"/>
    <property type="evidence" value="ECO:0007669"/>
    <property type="project" value="UniProtKB-KW"/>
</dbReference>
<dbReference type="GO" id="GO:0070040">
    <property type="term" value="F:rRNA (adenine(2503)-C2-)-methyltransferase activity"/>
    <property type="evidence" value="ECO:0007669"/>
    <property type="project" value="UniProtKB-UniRule"/>
</dbReference>
<dbReference type="GO" id="GO:0019843">
    <property type="term" value="F:rRNA binding"/>
    <property type="evidence" value="ECO:0007669"/>
    <property type="project" value="UniProtKB-UniRule"/>
</dbReference>
<dbReference type="GO" id="GO:0002935">
    <property type="term" value="F:tRNA (adenine(37)-C2)-methyltransferase activity"/>
    <property type="evidence" value="ECO:0007669"/>
    <property type="project" value="UniProtKB-UniRule"/>
</dbReference>
<dbReference type="GO" id="GO:0000049">
    <property type="term" value="F:tRNA binding"/>
    <property type="evidence" value="ECO:0007669"/>
    <property type="project" value="UniProtKB-UniRule"/>
</dbReference>
<dbReference type="GO" id="GO:0070475">
    <property type="term" value="P:rRNA base methylation"/>
    <property type="evidence" value="ECO:0007669"/>
    <property type="project" value="UniProtKB-UniRule"/>
</dbReference>
<dbReference type="GO" id="GO:0030488">
    <property type="term" value="P:tRNA methylation"/>
    <property type="evidence" value="ECO:0007669"/>
    <property type="project" value="UniProtKB-UniRule"/>
</dbReference>
<dbReference type="CDD" id="cd01335">
    <property type="entry name" value="Radical_SAM"/>
    <property type="match status" value="1"/>
</dbReference>
<dbReference type="FunFam" id="3.20.20.70:FF:000008">
    <property type="entry name" value="Dual-specificity RNA methyltransferase RlmN"/>
    <property type="match status" value="1"/>
</dbReference>
<dbReference type="Gene3D" id="1.10.150.530">
    <property type="match status" value="1"/>
</dbReference>
<dbReference type="Gene3D" id="3.20.20.70">
    <property type="entry name" value="Aldolase class I"/>
    <property type="match status" value="1"/>
</dbReference>
<dbReference type="HAMAP" id="MF_01849">
    <property type="entry name" value="RNA_methyltr_RlmN"/>
    <property type="match status" value="1"/>
</dbReference>
<dbReference type="InterPro" id="IPR013785">
    <property type="entry name" value="Aldolase_TIM"/>
</dbReference>
<dbReference type="InterPro" id="IPR040072">
    <property type="entry name" value="Methyltransferase_A"/>
</dbReference>
<dbReference type="InterPro" id="IPR048641">
    <property type="entry name" value="RlmN_N"/>
</dbReference>
<dbReference type="InterPro" id="IPR027492">
    <property type="entry name" value="RNA_MTrfase_RlmN"/>
</dbReference>
<dbReference type="InterPro" id="IPR004383">
    <property type="entry name" value="rRNA_lsu_MTrfase_RlmN/Cfr"/>
</dbReference>
<dbReference type="InterPro" id="IPR007197">
    <property type="entry name" value="rSAM"/>
</dbReference>
<dbReference type="NCBIfam" id="TIGR00048">
    <property type="entry name" value="rRNA_mod_RlmN"/>
    <property type="match status" value="1"/>
</dbReference>
<dbReference type="PANTHER" id="PTHR30544">
    <property type="entry name" value="23S RRNA METHYLTRANSFERASE"/>
    <property type="match status" value="1"/>
</dbReference>
<dbReference type="PANTHER" id="PTHR30544:SF5">
    <property type="entry name" value="RADICAL SAM CORE DOMAIN-CONTAINING PROTEIN"/>
    <property type="match status" value="1"/>
</dbReference>
<dbReference type="Pfam" id="PF04055">
    <property type="entry name" value="Radical_SAM"/>
    <property type="match status" value="1"/>
</dbReference>
<dbReference type="Pfam" id="PF21016">
    <property type="entry name" value="RlmN_N"/>
    <property type="match status" value="1"/>
</dbReference>
<dbReference type="PIRSF" id="PIRSF006004">
    <property type="entry name" value="CHP00048"/>
    <property type="match status" value="1"/>
</dbReference>
<dbReference type="SFLD" id="SFLDF00275">
    <property type="entry name" value="adenosine_C2_methyltransferase"/>
    <property type="match status" value="1"/>
</dbReference>
<dbReference type="SFLD" id="SFLDG01062">
    <property type="entry name" value="methyltransferase_(Class_A)"/>
    <property type="match status" value="1"/>
</dbReference>
<dbReference type="SUPFAM" id="SSF102114">
    <property type="entry name" value="Radical SAM enzymes"/>
    <property type="match status" value="1"/>
</dbReference>
<dbReference type="PROSITE" id="PS51918">
    <property type="entry name" value="RADICAL_SAM"/>
    <property type="match status" value="1"/>
</dbReference>
<keyword id="KW-0004">4Fe-4S</keyword>
<keyword id="KW-0963">Cytoplasm</keyword>
<keyword id="KW-1015">Disulfide bond</keyword>
<keyword id="KW-0408">Iron</keyword>
<keyword id="KW-0411">Iron-sulfur</keyword>
<keyword id="KW-0479">Metal-binding</keyword>
<keyword id="KW-0489">Methyltransferase</keyword>
<keyword id="KW-1185">Reference proteome</keyword>
<keyword id="KW-0698">rRNA processing</keyword>
<keyword id="KW-0949">S-adenosyl-L-methionine</keyword>
<keyword id="KW-0808">Transferase</keyword>
<keyword id="KW-0819">tRNA processing</keyword>
<evidence type="ECO:0000255" key="1">
    <source>
        <dbReference type="HAMAP-Rule" id="MF_01849"/>
    </source>
</evidence>
<evidence type="ECO:0000255" key="2">
    <source>
        <dbReference type="PROSITE-ProRule" id="PRU01266"/>
    </source>
</evidence>
<evidence type="ECO:0000256" key="3">
    <source>
        <dbReference type="SAM" id="MobiDB-lite"/>
    </source>
</evidence>
<proteinExistence type="inferred from homology"/>
<comment type="function">
    <text evidence="1">Specifically methylates position 2 of adenine 2503 in 23S rRNA and position 2 of adenine 37 in tRNAs. m2A2503 modification seems to play a crucial role in the proofreading step occurring at the peptidyl transferase center and thus would serve to optimize ribosomal fidelity.</text>
</comment>
<comment type="catalytic activity">
    <reaction evidence="1">
        <text>adenosine(2503) in 23S rRNA + 2 reduced [2Fe-2S]-[ferredoxin] + 2 S-adenosyl-L-methionine = 2-methyladenosine(2503) in 23S rRNA + 5'-deoxyadenosine + L-methionine + 2 oxidized [2Fe-2S]-[ferredoxin] + S-adenosyl-L-homocysteine</text>
        <dbReference type="Rhea" id="RHEA:42916"/>
        <dbReference type="Rhea" id="RHEA-COMP:10000"/>
        <dbReference type="Rhea" id="RHEA-COMP:10001"/>
        <dbReference type="Rhea" id="RHEA-COMP:10152"/>
        <dbReference type="Rhea" id="RHEA-COMP:10282"/>
        <dbReference type="ChEBI" id="CHEBI:17319"/>
        <dbReference type="ChEBI" id="CHEBI:33737"/>
        <dbReference type="ChEBI" id="CHEBI:33738"/>
        <dbReference type="ChEBI" id="CHEBI:57844"/>
        <dbReference type="ChEBI" id="CHEBI:57856"/>
        <dbReference type="ChEBI" id="CHEBI:59789"/>
        <dbReference type="ChEBI" id="CHEBI:74411"/>
        <dbReference type="ChEBI" id="CHEBI:74497"/>
        <dbReference type="EC" id="2.1.1.192"/>
    </reaction>
</comment>
<comment type="catalytic activity">
    <reaction evidence="1">
        <text>adenosine(37) in tRNA + 2 reduced [2Fe-2S]-[ferredoxin] + 2 S-adenosyl-L-methionine = 2-methyladenosine(37) in tRNA + 5'-deoxyadenosine + L-methionine + 2 oxidized [2Fe-2S]-[ferredoxin] + S-adenosyl-L-homocysteine</text>
        <dbReference type="Rhea" id="RHEA:43332"/>
        <dbReference type="Rhea" id="RHEA-COMP:10000"/>
        <dbReference type="Rhea" id="RHEA-COMP:10001"/>
        <dbReference type="Rhea" id="RHEA-COMP:10162"/>
        <dbReference type="Rhea" id="RHEA-COMP:10485"/>
        <dbReference type="ChEBI" id="CHEBI:17319"/>
        <dbReference type="ChEBI" id="CHEBI:33737"/>
        <dbReference type="ChEBI" id="CHEBI:33738"/>
        <dbReference type="ChEBI" id="CHEBI:57844"/>
        <dbReference type="ChEBI" id="CHEBI:57856"/>
        <dbReference type="ChEBI" id="CHEBI:59789"/>
        <dbReference type="ChEBI" id="CHEBI:74411"/>
        <dbReference type="ChEBI" id="CHEBI:74497"/>
        <dbReference type="EC" id="2.1.1.192"/>
    </reaction>
</comment>
<comment type="cofactor">
    <cofactor evidence="1">
        <name>[4Fe-4S] cluster</name>
        <dbReference type="ChEBI" id="CHEBI:49883"/>
    </cofactor>
    <text evidence="1">Binds 1 [4Fe-4S] cluster. The cluster is coordinated with 3 cysteines and an exchangeable S-adenosyl-L-methionine.</text>
</comment>
<comment type="subcellular location">
    <subcellularLocation>
        <location evidence="1">Cytoplasm</location>
    </subcellularLocation>
</comment>
<comment type="miscellaneous">
    <text evidence="1">Reaction proceeds by a ping-pong mechanism involving intermediate methylation of a conserved cysteine residue.</text>
</comment>
<comment type="similarity">
    <text evidence="1">Belongs to the radical SAM superfamily. RlmN family.</text>
</comment>